<proteinExistence type="inferred from homology"/>
<name>COXX_CERS1</name>
<gene>
    <name evidence="1" type="primary">ctaB</name>
    <name type="ordered locus">Rsph17029_0475</name>
</gene>
<keyword id="KW-0997">Cell inner membrane</keyword>
<keyword id="KW-1003">Cell membrane</keyword>
<keyword id="KW-0350">Heme biosynthesis</keyword>
<keyword id="KW-0472">Membrane</keyword>
<keyword id="KW-0808">Transferase</keyword>
<keyword id="KW-0812">Transmembrane</keyword>
<keyword id="KW-1133">Transmembrane helix</keyword>
<evidence type="ECO:0000255" key="1">
    <source>
        <dbReference type="HAMAP-Rule" id="MF_00154"/>
    </source>
</evidence>
<reference key="1">
    <citation type="submission" date="2007-02" db="EMBL/GenBank/DDBJ databases">
        <title>Complete sequence of chromosome 1 of Rhodobacter sphaeroides ATCC 17029.</title>
        <authorList>
            <person name="Copeland A."/>
            <person name="Lucas S."/>
            <person name="Lapidus A."/>
            <person name="Barry K."/>
            <person name="Detter J.C."/>
            <person name="Glavina del Rio T."/>
            <person name="Hammon N."/>
            <person name="Israni S."/>
            <person name="Dalin E."/>
            <person name="Tice H."/>
            <person name="Pitluck S."/>
            <person name="Kiss H."/>
            <person name="Brettin T."/>
            <person name="Bruce D."/>
            <person name="Han C."/>
            <person name="Tapia R."/>
            <person name="Gilna P."/>
            <person name="Schmutz J."/>
            <person name="Larimer F."/>
            <person name="Land M."/>
            <person name="Hauser L."/>
            <person name="Kyrpides N."/>
            <person name="Mikhailova N."/>
            <person name="Richardson P."/>
            <person name="Mackenzie C."/>
            <person name="Choudhary M."/>
            <person name="Donohue T.J."/>
            <person name="Kaplan S."/>
        </authorList>
    </citation>
    <scope>NUCLEOTIDE SEQUENCE [LARGE SCALE GENOMIC DNA]</scope>
    <source>
        <strain>ATCC 17029 / ATH 2.4.9</strain>
    </source>
</reference>
<dbReference type="EC" id="2.5.1.141" evidence="1"/>
<dbReference type="EMBL" id="CP000577">
    <property type="protein sequence ID" value="ABN75591.1"/>
    <property type="molecule type" value="Genomic_DNA"/>
</dbReference>
<dbReference type="RefSeq" id="WP_002722694.1">
    <property type="nucleotide sequence ID" value="NC_009049.1"/>
</dbReference>
<dbReference type="SMR" id="A3PGX5"/>
<dbReference type="GeneID" id="3719074"/>
<dbReference type="KEGG" id="rsh:Rsph17029_0475"/>
<dbReference type="HOGENOM" id="CLU_029631_0_2_5"/>
<dbReference type="UniPathway" id="UPA00834">
    <property type="reaction ID" value="UER00712"/>
</dbReference>
<dbReference type="GO" id="GO:0005886">
    <property type="term" value="C:plasma membrane"/>
    <property type="evidence" value="ECO:0007669"/>
    <property type="project" value="UniProtKB-SubCell"/>
</dbReference>
<dbReference type="GO" id="GO:0008495">
    <property type="term" value="F:protoheme IX farnesyltransferase activity"/>
    <property type="evidence" value="ECO:0007669"/>
    <property type="project" value="UniProtKB-UniRule"/>
</dbReference>
<dbReference type="GO" id="GO:0048034">
    <property type="term" value="P:heme O biosynthetic process"/>
    <property type="evidence" value="ECO:0007669"/>
    <property type="project" value="UniProtKB-UniRule"/>
</dbReference>
<dbReference type="CDD" id="cd13957">
    <property type="entry name" value="PT_UbiA_Cox10"/>
    <property type="match status" value="1"/>
</dbReference>
<dbReference type="Gene3D" id="1.10.357.140">
    <property type="entry name" value="UbiA prenyltransferase"/>
    <property type="match status" value="1"/>
</dbReference>
<dbReference type="HAMAP" id="MF_00154">
    <property type="entry name" value="CyoE_CtaB"/>
    <property type="match status" value="1"/>
</dbReference>
<dbReference type="InterPro" id="IPR006369">
    <property type="entry name" value="Protohaem_IX_farnesylTrfase"/>
</dbReference>
<dbReference type="InterPro" id="IPR000537">
    <property type="entry name" value="UbiA_prenyltransferase"/>
</dbReference>
<dbReference type="InterPro" id="IPR030470">
    <property type="entry name" value="UbiA_prenylTrfase_CS"/>
</dbReference>
<dbReference type="InterPro" id="IPR044878">
    <property type="entry name" value="UbiA_sf"/>
</dbReference>
<dbReference type="NCBIfam" id="TIGR01473">
    <property type="entry name" value="cyoE_ctaB"/>
    <property type="match status" value="1"/>
</dbReference>
<dbReference type="NCBIfam" id="NF003349">
    <property type="entry name" value="PRK04375.1-2"/>
    <property type="match status" value="1"/>
</dbReference>
<dbReference type="PANTHER" id="PTHR43448:SF7">
    <property type="entry name" value="4-HYDROXYBENZOATE SOLANESYLTRANSFERASE"/>
    <property type="match status" value="1"/>
</dbReference>
<dbReference type="PANTHER" id="PTHR43448">
    <property type="entry name" value="PROTOHEME IX FARNESYLTRANSFERASE, MITOCHONDRIAL"/>
    <property type="match status" value="1"/>
</dbReference>
<dbReference type="Pfam" id="PF01040">
    <property type="entry name" value="UbiA"/>
    <property type="match status" value="1"/>
</dbReference>
<dbReference type="PROSITE" id="PS00943">
    <property type="entry name" value="UBIA"/>
    <property type="match status" value="1"/>
</dbReference>
<accession>A3PGX5</accession>
<protein>
    <recommendedName>
        <fullName evidence="1">Protoheme IX farnesyltransferase</fullName>
        <ecNumber evidence="1">2.5.1.141</ecNumber>
    </recommendedName>
    <alternativeName>
        <fullName evidence="1">Heme B farnesyltransferase</fullName>
    </alternativeName>
    <alternativeName>
        <fullName evidence="1">Heme O synthase</fullName>
    </alternativeName>
</protein>
<organism>
    <name type="scientific">Cereibacter sphaeroides (strain ATCC 17029 / ATH 2.4.9)</name>
    <name type="common">Rhodobacter sphaeroides</name>
    <dbReference type="NCBI Taxonomy" id="349101"/>
    <lineage>
        <taxon>Bacteria</taxon>
        <taxon>Pseudomonadati</taxon>
        <taxon>Pseudomonadota</taxon>
        <taxon>Alphaproteobacteria</taxon>
        <taxon>Rhodobacterales</taxon>
        <taxon>Paracoccaceae</taxon>
        <taxon>Cereibacter</taxon>
    </lineage>
</organism>
<sequence>MTDIRITGIPKEAGFGDYVALLKPRVMSLVVFTALVGLLVAPVTVHPMIALTGILFIALGAGASGALNMWWDEDIDRVMKRTRNRPVPSGTVAPGEALGIGLALSGIAVVMLGLATNLFAAGLLAFTIFFYAVVYSMWLKRTTPQNIVIGGAAGAFPPMIGWAVATGGVSVESLFMFALIFMWTPPHFWSLALFMKSDYSDAGVPMLTVTHGRRVTRAHVLVYSLLLAPLAVAGAFTGIGGPLYLATALALNGWLLVGAVRIWRRDEAQAEADRYRVEKGFFRFSLYYLFLHFGAILAEAALKPYGLGGW</sequence>
<comment type="function">
    <text evidence="1">Converts heme B (protoheme IX) to heme O by substitution of the vinyl group on carbon 2 of heme B porphyrin ring with a hydroxyethyl farnesyl side group.</text>
</comment>
<comment type="catalytic activity">
    <reaction evidence="1">
        <text>heme b + (2E,6E)-farnesyl diphosphate + H2O = Fe(II)-heme o + diphosphate</text>
        <dbReference type="Rhea" id="RHEA:28070"/>
        <dbReference type="ChEBI" id="CHEBI:15377"/>
        <dbReference type="ChEBI" id="CHEBI:33019"/>
        <dbReference type="ChEBI" id="CHEBI:60344"/>
        <dbReference type="ChEBI" id="CHEBI:60530"/>
        <dbReference type="ChEBI" id="CHEBI:175763"/>
        <dbReference type="EC" id="2.5.1.141"/>
    </reaction>
</comment>
<comment type="pathway">
    <text evidence="1">Porphyrin-containing compound metabolism; heme O biosynthesis; heme O from protoheme: step 1/1.</text>
</comment>
<comment type="subunit">
    <text evidence="1">Interacts with CtaA.</text>
</comment>
<comment type="subcellular location">
    <subcellularLocation>
        <location evidence="1">Cell inner membrane</location>
        <topology evidence="1">Multi-pass membrane protein</topology>
    </subcellularLocation>
</comment>
<comment type="miscellaneous">
    <text evidence="1">Carbon 2 of the heme B porphyrin ring is defined according to the Fischer nomenclature.</text>
</comment>
<comment type="similarity">
    <text evidence="1">Belongs to the UbiA prenyltransferase family. Protoheme IX farnesyltransferase subfamily.</text>
</comment>
<feature type="chain" id="PRO_0000327136" description="Protoheme IX farnesyltransferase">
    <location>
        <begin position="1"/>
        <end position="310"/>
    </location>
</feature>
<feature type="transmembrane region" description="Helical" evidence="1">
    <location>
        <begin position="26"/>
        <end position="45"/>
    </location>
</feature>
<feature type="transmembrane region" description="Helical" evidence="1">
    <location>
        <begin position="49"/>
        <end position="71"/>
    </location>
</feature>
<feature type="transmembrane region" description="Helical" evidence="1">
    <location>
        <begin position="95"/>
        <end position="115"/>
    </location>
</feature>
<feature type="transmembrane region" description="Helical" evidence="1">
    <location>
        <begin position="118"/>
        <end position="138"/>
    </location>
</feature>
<feature type="transmembrane region" description="Helical" evidence="1">
    <location>
        <begin position="147"/>
        <end position="167"/>
    </location>
</feature>
<feature type="transmembrane region" description="Helical" evidence="1">
    <location>
        <begin position="174"/>
        <end position="194"/>
    </location>
</feature>
<feature type="transmembrane region" description="Helical" evidence="1">
    <location>
        <begin position="220"/>
        <end position="240"/>
    </location>
</feature>
<feature type="transmembrane region" description="Helical" evidence="1">
    <location>
        <begin position="243"/>
        <end position="263"/>
    </location>
</feature>
<feature type="transmembrane region" description="Helical" evidence="1">
    <location>
        <begin position="289"/>
        <end position="309"/>
    </location>
</feature>